<protein>
    <recommendedName>
        <fullName evidence="1">Urease subunit alpha</fullName>
        <ecNumber evidence="1">3.5.1.5</ecNumber>
    </recommendedName>
    <alternativeName>
        <fullName evidence="1">Urea amidohydrolase subunit alpha</fullName>
    </alternativeName>
</protein>
<evidence type="ECO:0000255" key="1">
    <source>
        <dbReference type="HAMAP-Rule" id="MF_01953"/>
    </source>
</evidence>
<evidence type="ECO:0000269" key="2">
    <source>
    </source>
</evidence>
<keyword id="KW-0963">Cytoplasm</keyword>
<keyword id="KW-0903">Direct protein sequencing</keyword>
<keyword id="KW-0378">Hydrolase</keyword>
<keyword id="KW-0479">Metal-binding</keyword>
<keyword id="KW-0533">Nickel</keyword>
<keyword id="KW-1185">Reference proteome</keyword>
<feature type="initiator methionine" description="Removed" evidence="2">
    <location>
        <position position="1"/>
    </location>
</feature>
<feature type="chain" id="PRO_0000234182" description="Urease subunit alpha">
    <location>
        <begin position="2"/>
        <end position="571"/>
    </location>
</feature>
<feature type="domain" description="Urease" evidence="1">
    <location>
        <begin position="133"/>
        <end position="571"/>
    </location>
</feature>
<feature type="active site" description="Proton donor" evidence="1">
    <location>
        <position position="324"/>
    </location>
</feature>
<feature type="binding site" evidence="1">
    <location>
        <position position="138"/>
    </location>
    <ligand>
        <name>Ni(2+)</name>
        <dbReference type="ChEBI" id="CHEBI:49786"/>
        <label>1</label>
    </ligand>
</feature>
<feature type="binding site" evidence="1">
    <location>
        <position position="140"/>
    </location>
    <ligand>
        <name>Ni(2+)</name>
        <dbReference type="ChEBI" id="CHEBI:49786"/>
        <label>1</label>
    </ligand>
</feature>
<feature type="binding site" description="via carbamate group" evidence="1">
    <location>
        <position position="221"/>
    </location>
    <ligand>
        <name>Ni(2+)</name>
        <dbReference type="ChEBI" id="CHEBI:49786"/>
        <label>1</label>
    </ligand>
</feature>
<feature type="binding site" description="via carbamate group" evidence="1">
    <location>
        <position position="221"/>
    </location>
    <ligand>
        <name>Ni(2+)</name>
        <dbReference type="ChEBI" id="CHEBI:49786"/>
        <label>2</label>
    </ligand>
</feature>
<feature type="binding site" evidence="1">
    <location>
        <position position="223"/>
    </location>
    <ligand>
        <name>substrate</name>
    </ligand>
</feature>
<feature type="binding site" evidence="1">
    <location>
        <position position="250"/>
    </location>
    <ligand>
        <name>Ni(2+)</name>
        <dbReference type="ChEBI" id="CHEBI:49786"/>
        <label>2</label>
    </ligand>
</feature>
<feature type="binding site" evidence="1">
    <location>
        <position position="276"/>
    </location>
    <ligand>
        <name>Ni(2+)</name>
        <dbReference type="ChEBI" id="CHEBI:49786"/>
        <label>2</label>
    </ligand>
</feature>
<feature type="binding site" evidence="1">
    <location>
        <position position="364"/>
    </location>
    <ligand>
        <name>Ni(2+)</name>
        <dbReference type="ChEBI" id="CHEBI:49786"/>
        <label>1</label>
    </ligand>
</feature>
<feature type="modified residue" description="N6-carboxylysine" evidence="1">
    <location>
        <position position="221"/>
    </location>
</feature>
<proteinExistence type="evidence at protein level"/>
<sequence length="571" mass="61942">MSFKMTQSQYTSLYGPTVGDSVRLGDTNLFARVERDYATYGDEAAFGGGKSIRDGMAQNPNVTRDDKQVADLVITNAMIIDYDKIVKADIGVKNGYIMKIGKAGNPDIMDNVDIIIGATTDIISAEGKIVTAGGIDTHVHFINPEQSQVALESGITTHIGGGTGASEGTKATTVTPGPWHLHRMLLAAESLPLNIGFTGKGQAVNHTALVEQIHAGAIGLKVHEDWGATPSALDHALQVADDYDVQIALHADTLNEAGFMEETMAAVKDRVLHMYHTEGAGGGHAPDLIKSAAYANILPSSTNPTLPYTVNTIDEHLDMVMITHHLNASIPEDIAFADSRIRKETIAAEDVLQDMGVFSMVSSDSQAMGRVGEVITRTWQVAHRMKEQRGLLDGDSEYNDNNRIKRYIAKYTINPAITHGISDYVGSIDEGKLADIILWEPAFFGVKPDVIVKGGLINAAINGDANGSIPTSEPLKYRKMYGQLGGNLQSTSMTFVSTTAYENDIGKLLGLKRKLRPVHNIRKLSKKDMKNNNATPDLDVDPQTYEVFVDGEKITSEPATELPLTQRYFLF</sequence>
<reference key="1">
    <citation type="journal article" date="2005" name="Proc. Natl. Acad. Sci. U.S.A.">
        <title>Whole genome sequence of Staphylococcus saprophyticus reveals the pathogenesis of uncomplicated urinary tract infection.</title>
        <authorList>
            <person name="Kuroda M."/>
            <person name="Yamashita A."/>
            <person name="Hirakawa H."/>
            <person name="Kumano M."/>
            <person name="Morikawa K."/>
            <person name="Higashide M."/>
            <person name="Maruyama A."/>
            <person name="Inose Y."/>
            <person name="Matoba K."/>
            <person name="Toh H."/>
            <person name="Kuhara S."/>
            <person name="Hattori M."/>
            <person name="Ohta T."/>
        </authorList>
    </citation>
    <scope>NUCLEOTIDE SEQUENCE [LARGE SCALE GENOMIC DNA]</scope>
    <source>
        <strain>ATCC 15305 / DSM 20229 / NCIMB 8711 / NCTC 7292 / S-41</strain>
    </source>
</reference>
<reference key="2">
    <citation type="journal article" date="1994" name="Arch. Microbiol.">
        <title>Urease from Staphylococcus saprophyticus: purification, characterization and comparison to Staphylococcus xylosus urease.</title>
        <authorList>
            <person name="Schaefer U.K."/>
            <person name="Kaltwasser H."/>
        </authorList>
    </citation>
    <scope>PROTEIN SEQUENCE OF 2-6</scope>
    <scope>CATALYTIC ACTIVITY</scope>
    <scope>BIOPHYSICOCHEMICAL PROPERTIES</scope>
</reference>
<gene>
    <name evidence="1" type="primary">ureC</name>
    <name type="ordered locus">SSP0263</name>
</gene>
<dbReference type="EC" id="3.5.1.5" evidence="1"/>
<dbReference type="EMBL" id="AP008934">
    <property type="protein sequence ID" value="BAE17408.1"/>
    <property type="molecule type" value="Genomic_DNA"/>
</dbReference>
<dbReference type="RefSeq" id="WP_002482218.1">
    <property type="nucleotide sequence ID" value="NZ_MTGA01000037.1"/>
</dbReference>
<dbReference type="SMR" id="Q4A0J5"/>
<dbReference type="GeneID" id="66866429"/>
<dbReference type="KEGG" id="ssp:SSP0263"/>
<dbReference type="eggNOG" id="COG0804">
    <property type="taxonomic scope" value="Bacteria"/>
</dbReference>
<dbReference type="HOGENOM" id="CLU_000980_0_0_9"/>
<dbReference type="OrthoDB" id="9802793at2"/>
<dbReference type="UniPathway" id="UPA00258">
    <property type="reaction ID" value="UER00370"/>
</dbReference>
<dbReference type="Proteomes" id="UP000006371">
    <property type="component" value="Chromosome"/>
</dbReference>
<dbReference type="GO" id="GO:0005737">
    <property type="term" value="C:cytoplasm"/>
    <property type="evidence" value="ECO:0007669"/>
    <property type="project" value="UniProtKB-SubCell"/>
</dbReference>
<dbReference type="GO" id="GO:0016151">
    <property type="term" value="F:nickel cation binding"/>
    <property type="evidence" value="ECO:0007669"/>
    <property type="project" value="UniProtKB-UniRule"/>
</dbReference>
<dbReference type="GO" id="GO:0009039">
    <property type="term" value="F:urease activity"/>
    <property type="evidence" value="ECO:0007669"/>
    <property type="project" value="UniProtKB-UniRule"/>
</dbReference>
<dbReference type="GO" id="GO:0043419">
    <property type="term" value="P:urea catabolic process"/>
    <property type="evidence" value="ECO:0007669"/>
    <property type="project" value="UniProtKB-UniRule"/>
</dbReference>
<dbReference type="CDD" id="cd00375">
    <property type="entry name" value="Urease_alpha"/>
    <property type="match status" value="1"/>
</dbReference>
<dbReference type="Gene3D" id="3.20.20.140">
    <property type="entry name" value="Metal-dependent hydrolases"/>
    <property type="match status" value="1"/>
</dbReference>
<dbReference type="Gene3D" id="2.30.40.10">
    <property type="entry name" value="Urease, subunit C, domain 1"/>
    <property type="match status" value="1"/>
</dbReference>
<dbReference type="HAMAP" id="MF_01953">
    <property type="entry name" value="Urease_alpha"/>
    <property type="match status" value="1"/>
</dbReference>
<dbReference type="InterPro" id="IPR006680">
    <property type="entry name" value="Amidohydro-rel"/>
</dbReference>
<dbReference type="InterPro" id="IPR011059">
    <property type="entry name" value="Metal-dep_hydrolase_composite"/>
</dbReference>
<dbReference type="InterPro" id="IPR032466">
    <property type="entry name" value="Metal_Hydrolase"/>
</dbReference>
<dbReference type="InterPro" id="IPR011612">
    <property type="entry name" value="Urease_alpha_N_dom"/>
</dbReference>
<dbReference type="InterPro" id="IPR050112">
    <property type="entry name" value="Urease_alpha_subunit"/>
</dbReference>
<dbReference type="InterPro" id="IPR017950">
    <property type="entry name" value="Urease_AS"/>
</dbReference>
<dbReference type="InterPro" id="IPR005848">
    <property type="entry name" value="Urease_asu"/>
</dbReference>
<dbReference type="InterPro" id="IPR017951">
    <property type="entry name" value="Urease_asu_c"/>
</dbReference>
<dbReference type="InterPro" id="IPR029754">
    <property type="entry name" value="Urease_Ni-bd"/>
</dbReference>
<dbReference type="NCBIfam" id="NF009686">
    <property type="entry name" value="PRK13207.1"/>
    <property type="match status" value="1"/>
</dbReference>
<dbReference type="NCBIfam" id="TIGR01792">
    <property type="entry name" value="urease_alph"/>
    <property type="match status" value="1"/>
</dbReference>
<dbReference type="PANTHER" id="PTHR43440">
    <property type="entry name" value="UREASE"/>
    <property type="match status" value="1"/>
</dbReference>
<dbReference type="PANTHER" id="PTHR43440:SF1">
    <property type="entry name" value="UREASE"/>
    <property type="match status" value="1"/>
</dbReference>
<dbReference type="Pfam" id="PF01979">
    <property type="entry name" value="Amidohydro_1"/>
    <property type="match status" value="1"/>
</dbReference>
<dbReference type="Pfam" id="PF00449">
    <property type="entry name" value="Urease_alpha"/>
    <property type="match status" value="1"/>
</dbReference>
<dbReference type="PRINTS" id="PR01752">
    <property type="entry name" value="UREASE"/>
</dbReference>
<dbReference type="SUPFAM" id="SSF51338">
    <property type="entry name" value="Composite domain of metallo-dependent hydrolases"/>
    <property type="match status" value="1"/>
</dbReference>
<dbReference type="SUPFAM" id="SSF51556">
    <property type="entry name" value="Metallo-dependent hydrolases"/>
    <property type="match status" value="1"/>
</dbReference>
<dbReference type="PROSITE" id="PS01120">
    <property type="entry name" value="UREASE_1"/>
    <property type="match status" value="1"/>
</dbReference>
<dbReference type="PROSITE" id="PS00145">
    <property type="entry name" value="UREASE_2"/>
    <property type="match status" value="1"/>
</dbReference>
<dbReference type="PROSITE" id="PS51368">
    <property type="entry name" value="UREASE_3"/>
    <property type="match status" value="1"/>
</dbReference>
<name>URE1_STAS1</name>
<comment type="catalytic activity">
    <reaction evidence="1 2">
        <text>urea + 2 H2O + H(+) = hydrogencarbonate + 2 NH4(+)</text>
        <dbReference type="Rhea" id="RHEA:20557"/>
        <dbReference type="ChEBI" id="CHEBI:15377"/>
        <dbReference type="ChEBI" id="CHEBI:15378"/>
        <dbReference type="ChEBI" id="CHEBI:16199"/>
        <dbReference type="ChEBI" id="CHEBI:17544"/>
        <dbReference type="ChEBI" id="CHEBI:28938"/>
        <dbReference type="EC" id="3.5.1.5"/>
    </reaction>
</comment>
<comment type="cofactor">
    <cofactor evidence="1">
        <name>Ni cation</name>
        <dbReference type="ChEBI" id="CHEBI:25516"/>
    </cofactor>
    <text evidence="1">Binds 2 nickel ions per subunit.</text>
</comment>
<comment type="biophysicochemical properties">
    <kinetics>
        <KM evidence="2">9.5 mM for urea (at 37 degrees Celsius and pH 7.0)</KM>
        <Vmax evidence="2">1.979 mmol/min/mg enzyme</Vmax>
    </kinetics>
    <phDependence>
        <text evidence="2">Optimum pH is 7.0 in phosphate buffer.</text>
    </phDependence>
    <temperatureDependence>
        <text evidence="2">Optimum temperature is 55 degrees Celsius.</text>
    </temperatureDependence>
</comment>
<comment type="pathway">
    <text evidence="1">Nitrogen metabolism; urea degradation; CO(2) and NH(3) from urea (urease route): step 1/1.</text>
</comment>
<comment type="subunit">
    <text evidence="1">Heterotrimer of UreA (gamma), UreB (beta) and UreC (alpha) subunits. Three heterotrimers associate to form the active enzyme.</text>
</comment>
<comment type="subcellular location">
    <subcellularLocation>
        <location evidence="1">Cytoplasm</location>
    </subcellularLocation>
</comment>
<comment type="PTM">
    <text evidence="1">Carboxylation allows a single lysine to coordinate two nickel ions.</text>
</comment>
<comment type="similarity">
    <text evidence="1">Belongs to the metallo-dependent hydrolases superfamily. Urease alpha subunit family.</text>
</comment>
<accession>Q4A0J5</accession>
<organism>
    <name type="scientific">Staphylococcus saprophyticus subsp. saprophyticus (strain ATCC 15305 / DSM 20229 / NCIMB 8711 / NCTC 7292 / S-41)</name>
    <dbReference type="NCBI Taxonomy" id="342451"/>
    <lineage>
        <taxon>Bacteria</taxon>
        <taxon>Bacillati</taxon>
        <taxon>Bacillota</taxon>
        <taxon>Bacilli</taxon>
        <taxon>Bacillales</taxon>
        <taxon>Staphylococcaceae</taxon>
        <taxon>Staphylococcus</taxon>
    </lineage>
</organism>